<evidence type="ECO:0000255" key="1">
    <source>
        <dbReference type="HAMAP-Rule" id="MF_01124"/>
    </source>
</evidence>
<evidence type="ECO:0000256" key="2">
    <source>
        <dbReference type="SAM" id="MobiDB-lite"/>
    </source>
</evidence>
<name>MECA_STAA1</name>
<gene>
    <name evidence="1" type="primary">mecA</name>
    <name type="ordered locus">SAHV_0993</name>
</gene>
<comment type="function">
    <text evidence="1">Enables the recognition and targeting of unfolded and aggregated proteins to the ClpC protease or to other proteins involved in proteolysis.</text>
</comment>
<comment type="subunit">
    <text evidence="1">Homodimer.</text>
</comment>
<comment type="domain">
    <text>The N-terminal domain probably binds unfolded/aggregated proteins; the C-terminal domain interacts with ClpC.</text>
</comment>
<comment type="similarity">
    <text evidence="1">Belongs to the MecA family.</text>
</comment>
<protein>
    <recommendedName>
        <fullName evidence="1">Adapter protein MecA</fullName>
    </recommendedName>
</protein>
<organism>
    <name type="scientific">Staphylococcus aureus (strain Mu3 / ATCC 700698)</name>
    <dbReference type="NCBI Taxonomy" id="418127"/>
    <lineage>
        <taxon>Bacteria</taxon>
        <taxon>Bacillati</taxon>
        <taxon>Bacillota</taxon>
        <taxon>Bacilli</taxon>
        <taxon>Bacillales</taxon>
        <taxon>Staphylococcaceae</taxon>
        <taxon>Staphylococcus</taxon>
    </lineage>
</organism>
<feature type="chain" id="PRO_1000065345" description="Adapter protein MecA">
    <location>
        <begin position="1"/>
        <end position="239"/>
    </location>
</feature>
<feature type="region of interest" description="Disordered" evidence="2">
    <location>
        <begin position="118"/>
        <end position="137"/>
    </location>
</feature>
<feature type="compositionally biased region" description="Basic and acidic residues" evidence="2">
    <location>
        <begin position="118"/>
        <end position="128"/>
    </location>
</feature>
<proteinExistence type="inferred from homology"/>
<reference key="1">
    <citation type="journal article" date="2008" name="Antimicrob. Agents Chemother.">
        <title>Mutated response regulator graR is responsible for phenotypic conversion of Staphylococcus aureus from heterogeneous vancomycin-intermediate resistance to vancomycin-intermediate resistance.</title>
        <authorList>
            <person name="Neoh H.-M."/>
            <person name="Cui L."/>
            <person name="Yuzawa H."/>
            <person name="Takeuchi F."/>
            <person name="Matsuo M."/>
            <person name="Hiramatsu K."/>
        </authorList>
    </citation>
    <scope>NUCLEOTIDE SEQUENCE [LARGE SCALE GENOMIC DNA]</scope>
    <source>
        <strain>Mu3 / ATCC 700698</strain>
    </source>
</reference>
<dbReference type="EMBL" id="AP009324">
    <property type="protein sequence ID" value="BAF77876.1"/>
    <property type="molecule type" value="Genomic_DNA"/>
</dbReference>
<dbReference type="RefSeq" id="WP_001217728.1">
    <property type="nucleotide sequence ID" value="NC_009782.1"/>
</dbReference>
<dbReference type="SMR" id="A7X0M2"/>
<dbReference type="GeneID" id="98345315"/>
<dbReference type="KEGG" id="saw:SAHV_0993"/>
<dbReference type="HOGENOM" id="CLU_071496_2_1_9"/>
<dbReference type="GO" id="GO:0030674">
    <property type="term" value="F:protein-macromolecule adaptor activity"/>
    <property type="evidence" value="ECO:0007669"/>
    <property type="project" value="UniProtKB-UniRule"/>
</dbReference>
<dbReference type="Gene3D" id="3.30.70.1950">
    <property type="match status" value="1"/>
</dbReference>
<dbReference type="HAMAP" id="MF_01124">
    <property type="entry name" value="MecA"/>
    <property type="match status" value="1"/>
</dbReference>
<dbReference type="InterPro" id="IPR038471">
    <property type="entry name" value="MecA_C_sf"/>
</dbReference>
<dbReference type="InterPro" id="IPR008681">
    <property type="entry name" value="Neg-reg_MecA"/>
</dbReference>
<dbReference type="NCBIfam" id="NF002642">
    <property type="entry name" value="PRK02315.1-3"/>
    <property type="match status" value="1"/>
</dbReference>
<dbReference type="NCBIfam" id="NF002644">
    <property type="entry name" value="PRK02315.1-5"/>
    <property type="match status" value="1"/>
</dbReference>
<dbReference type="PANTHER" id="PTHR39161">
    <property type="entry name" value="ADAPTER PROTEIN MECA"/>
    <property type="match status" value="1"/>
</dbReference>
<dbReference type="PANTHER" id="PTHR39161:SF1">
    <property type="entry name" value="ADAPTER PROTEIN MECA 1"/>
    <property type="match status" value="1"/>
</dbReference>
<dbReference type="Pfam" id="PF05389">
    <property type="entry name" value="MecA"/>
    <property type="match status" value="1"/>
</dbReference>
<dbReference type="PIRSF" id="PIRSF029008">
    <property type="entry name" value="MecA"/>
    <property type="match status" value="1"/>
</dbReference>
<accession>A7X0M2</accession>
<sequence>MRIERVDDTTVKLFITYSDIEARGFSREDLWTNRKRGEEFFWSMMDEINEEEDFVVEGPLWIQVHAFEKGVEVTISKSKNEDMMNMSDDDATDQFDEQVQELLAQTLEGEDQLEELFEQRTKEKEAQGSKRQKSSARKNTRTIIVKFNDLEDVINYAYHSNPITTEFEDLLYMVDGTYYYAVHFDSHVDQEVINDSYSQLLEFAYPTDRTEVYLNDYAKIIMSHNVTAQVRRYFPETTE</sequence>